<proteinExistence type="inferred from homology"/>
<organism>
    <name type="scientific">Kitasatospora aureofaciens</name>
    <name type="common">Streptomyces aureofaciens</name>
    <dbReference type="NCBI Taxonomy" id="1894"/>
    <lineage>
        <taxon>Bacteria</taxon>
        <taxon>Bacillati</taxon>
        <taxon>Actinomycetota</taxon>
        <taxon>Actinomycetes</taxon>
        <taxon>Kitasatosporales</taxon>
        <taxon>Streptomycetaceae</taxon>
        <taxon>Kitasatospora</taxon>
    </lineage>
</organism>
<evidence type="ECO:0000250" key="1">
    <source>
        <dbReference type="UniProtKB" id="Q58499"/>
    </source>
</evidence>
<evidence type="ECO:0000305" key="2"/>
<feature type="chain" id="PRO_0000134870" description="Putative (5-formylfuran-3-yl)methyl phosphate synthase">
    <location>
        <begin position="1"/>
        <end position="251"/>
    </location>
</feature>
<feature type="active site" description="Schiff-base intermediate with substrate" evidence="1">
    <location>
        <position position="29"/>
    </location>
</feature>
<feature type="active site" description="Proton acceptor" evidence="1">
    <location>
        <position position="87"/>
    </location>
</feature>
<protein>
    <recommendedName>
        <fullName evidence="1">Putative (5-formylfuran-3-yl)methyl phosphate synthase</fullName>
        <ecNumber evidence="1">4.2.3.153</ecNumber>
    </recommendedName>
    <alternativeName>
        <fullName evidence="1">4-(hydroxymethyl)-2-furancarboxaldehyde-phosphate synthase</fullName>
        <shortName evidence="1">4-HFC-P synthase</shortName>
    </alternativeName>
</protein>
<sequence>MLLLISPDSVEEALDCAKAAEHLDIVDVKKPDEGSLGANFPWVIREIRDAVPADKPVSATVGDVPYKPGTVAQAALGAVVSGATYIKVGLYGCTTPDQGIEVMRAVVRAVKDHRPDALVVASGYADAHRIGCVNPLAVPDIAARSGADAAMLDTAIKDGTRLFDHVPPEVCAEFVRLAHTSGLLAALAGSVTQADLGPLTHMGTDIVGVRGAVCEGGDRNAGRIQPHLVAAFRAEMDRHAREHAVGVPAVN</sequence>
<accession>Q9X4H5</accession>
<keyword id="KW-0456">Lyase</keyword>
<keyword id="KW-0704">Schiff base</keyword>
<dbReference type="EC" id="4.2.3.153" evidence="1"/>
<dbReference type="EMBL" id="AF110772">
    <property type="protein sequence ID" value="AAD23399.1"/>
    <property type="status" value="ALT_INIT"/>
    <property type="molecule type" value="Genomic_DNA"/>
</dbReference>
<dbReference type="SMR" id="Q9X4H5"/>
<dbReference type="GO" id="GO:0016829">
    <property type="term" value="F:lyase activity"/>
    <property type="evidence" value="ECO:0007669"/>
    <property type="project" value="UniProtKB-KW"/>
</dbReference>
<dbReference type="InterPro" id="IPR007565">
    <property type="entry name" value="4HFCP_synth"/>
</dbReference>
<dbReference type="InterPro" id="IPR011060">
    <property type="entry name" value="RibuloseP-bd_barrel"/>
</dbReference>
<dbReference type="NCBIfam" id="NF002573">
    <property type="entry name" value="PRK02227.1-1"/>
    <property type="match status" value="1"/>
</dbReference>
<dbReference type="Pfam" id="PF04476">
    <property type="entry name" value="4HFCP_synth"/>
    <property type="match status" value="1"/>
</dbReference>
<dbReference type="PIRSF" id="PIRSF015957">
    <property type="entry name" value="UCP015957"/>
    <property type="match status" value="1"/>
</dbReference>
<dbReference type="SUPFAM" id="SSF51366">
    <property type="entry name" value="Ribulose-phoshate binding barrel"/>
    <property type="match status" value="1"/>
</dbReference>
<reference key="1">
    <citation type="journal article" date="1999" name="Folia Microbiol. (Praha)">
        <title>Cloning of the putative aldehyde dehydrogenase, aldA, gene from Streptomyces aureofaciens.</title>
        <authorList>
            <person name="Sprusansky O."/>
            <person name="Homerova D."/>
            <person name="Sevcikova B."/>
            <person name="Kormanec J."/>
        </authorList>
    </citation>
    <scope>NUCLEOTIDE SEQUENCE [GENOMIC DNA]</scope>
    <source>
        <strain>ATCC 10762 / DSM 40127 / CCM 3239 / JCM 4008 / LMG 5968 / NBRC 12843 / NCIMB 8234 / A-377</strain>
    </source>
</reference>
<comment type="function">
    <text evidence="1">Catalyzes the formation of 4-(hydroxymethyl)-2-furancarboxaldehyde phosphate (4-HFC-P) from two molecules of glyceraldehyde-3-P (GA-3-P).</text>
</comment>
<comment type="catalytic activity">
    <reaction evidence="1">
        <text>2 D-glyceraldehyde 3-phosphate = 4-(hydroxymethyl)-2-furancarboxaldehyde phosphate + phosphate + 2 H2O</text>
        <dbReference type="Rhea" id="RHEA:43536"/>
        <dbReference type="ChEBI" id="CHEBI:15377"/>
        <dbReference type="ChEBI" id="CHEBI:43474"/>
        <dbReference type="ChEBI" id="CHEBI:59776"/>
        <dbReference type="ChEBI" id="CHEBI:83407"/>
        <dbReference type="EC" id="4.2.3.153"/>
    </reaction>
</comment>
<comment type="similarity">
    <text evidence="2">Belongs to the MfnB family.</text>
</comment>
<comment type="sequence caution" evidence="2">
    <conflict type="erroneous initiation">
        <sequence resource="EMBL-CDS" id="AAD23399"/>
    </conflict>
</comment>
<name>Y264_KITAU</name>